<reference key="1">
    <citation type="journal article" date="2003" name="Proc. Natl. Acad. Sci. U.S.A.">
        <title>Complete genome sequence of Lactobacillus plantarum WCFS1.</title>
        <authorList>
            <person name="Kleerebezem M."/>
            <person name="Boekhorst J."/>
            <person name="van Kranenburg R."/>
            <person name="Molenaar D."/>
            <person name="Kuipers O.P."/>
            <person name="Leer R."/>
            <person name="Tarchini R."/>
            <person name="Peters S.A."/>
            <person name="Sandbrink H.M."/>
            <person name="Fiers M.W.E.J."/>
            <person name="Stiekema W."/>
            <person name="Klein Lankhorst R.M."/>
            <person name="Bron P.A."/>
            <person name="Hoffer S.M."/>
            <person name="Nierop Groot M.N."/>
            <person name="Kerkhoven R."/>
            <person name="De Vries M."/>
            <person name="Ursing B."/>
            <person name="De Vos W.M."/>
            <person name="Siezen R.J."/>
        </authorList>
    </citation>
    <scope>NUCLEOTIDE SEQUENCE [LARGE SCALE GENOMIC DNA]</scope>
    <source>
        <strain>ATCC BAA-793 / NCIMB 8826 / WCFS1</strain>
    </source>
</reference>
<reference key="2">
    <citation type="journal article" date="2012" name="J. Bacteriol.">
        <title>Complete resequencing and reannotation of the Lactobacillus plantarum WCFS1 genome.</title>
        <authorList>
            <person name="Siezen R.J."/>
            <person name="Francke C."/>
            <person name="Renckens B."/>
            <person name="Boekhorst J."/>
            <person name="Wels M."/>
            <person name="Kleerebezem M."/>
            <person name="van Hijum S.A."/>
        </authorList>
    </citation>
    <scope>NUCLEOTIDE SEQUENCE [LARGE SCALE GENOMIC DNA]</scope>
    <scope>GENOME REANNOTATION</scope>
    <source>
        <strain>ATCC BAA-793 / NCIMB 8826 / WCFS1</strain>
    </source>
</reference>
<feature type="chain" id="PRO_0000176781" description="Small ribosomal subunit protein bS6">
    <location>
        <begin position="1"/>
        <end position="99"/>
    </location>
</feature>
<organism>
    <name type="scientific">Lactiplantibacillus plantarum (strain ATCC BAA-793 / NCIMB 8826 / WCFS1)</name>
    <name type="common">Lactobacillus plantarum</name>
    <dbReference type="NCBI Taxonomy" id="220668"/>
    <lineage>
        <taxon>Bacteria</taxon>
        <taxon>Bacillati</taxon>
        <taxon>Bacillota</taxon>
        <taxon>Bacilli</taxon>
        <taxon>Lactobacillales</taxon>
        <taxon>Lactobacillaceae</taxon>
        <taxon>Lactiplantibacillus</taxon>
    </lineage>
</organism>
<dbReference type="EMBL" id="AL935263">
    <property type="protein sequence ID" value="CCC77586.1"/>
    <property type="molecule type" value="Genomic_DNA"/>
</dbReference>
<dbReference type="RefSeq" id="WP_003637271.1">
    <property type="nucleotide sequence ID" value="NC_004567.2"/>
</dbReference>
<dbReference type="RefSeq" id="YP_004888100.1">
    <property type="nucleotide sequence ID" value="NC_004567.2"/>
</dbReference>
<dbReference type="SMR" id="Q890K2"/>
<dbReference type="STRING" id="220668.lp_0009"/>
<dbReference type="EnsemblBacteria" id="CCC77586">
    <property type="protein sequence ID" value="CCC77586"/>
    <property type="gene ID" value="lp_0009"/>
</dbReference>
<dbReference type="GeneID" id="89667772"/>
<dbReference type="KEGG" id="lpl:lp_0009"/>
<dbReference type="PATRIC" id="fig|220668.9.peg.7"/>
<dbReference type="eggNOG" id="COG0360">
    <property type="taxonomic scope" value="Bacteria"/>
</dbReference>
<dbReference type="HOGENOM" id="CLU_113441_5_3_9"/>
<dbReference type="OrthoDB" id="9812702at2"/>
<dbReference type="PhylomeDB" id="Q890K2"/>
<dbReference type="Proteomes" id="UP000000432">
    <property type="component" value="Chromosome"/>
</dbReference>
<dbReference type="GO" id="GO:0005737">
    <property type="term" value="C:cytoplasm"/>
    <property type="evidence" value="ECO:0007669"/>
    <property type="project" value="UniProtKB-ARBA"/>
</dbReference>
<dbReference type="GO" id="GO:1990904">
    <property type="term" value="C:ribonucleoprotein complex"/>
    <property type="evidence" value="ECO:0007669"/>
    <property type="project" value="UniProtKB-KW"/>
</dbReference>
<dbReference type="GO" id="GO:0005840">
    <property type="term" value="C:ribosome"/>
    <property type="evidence" value="ECO:0007669"/>
    <property type="project" value="UniProtKB-KW"/>
</dbReference>
<dbReference type="GO" id="GO:0070181">
    <property type="term" value="F:small ribosomal subunit rRNA binding"/>
    <property type="evidence" value="ECO:0007669"/>
    <property type="project" value="TreeGrafter"/>
</dbReference>
<dbReference type="GO" id="GO:0003735">
    <property type="term" value="F:structural constituent of ribosome"/>
    <property type="evidence" value="ECO:0007669"/>
    <property type="project" value="InterPro"/>
</dbReference>
<dbReference type="GO" id="GO:0006412">
    <property type="term" value="P:translation"/>
    <property type="evidence" value="ECO:0007669"/>
    <property type="project" value="UniProtKB-UniRule"/>
</dbReference>
<dbReference type="CDD" id="cd00473">
    <property type="entry name" value="bS6"/>
    <property type="match status" value="1"/>
</dbReference>
<dbReference type="FunFam" id="3.30.70.60:FF:000002">
    <property type="entry name" value="30S ribosomal protein S6"/>
    <property type="match status" value="1"/>
</dbReference>
<dbReference type="Gene3D" id="3.30.70.60">
    <property type="match status" value="1"/>
</dbReference>
<dbReference type="HAMAP" id="MF_00360">
    <property type="entry name" value="Ribosomal_bS6"/>
    <property type="match status" value="1"/>
</dbReference>
<dbReference type="InterPro" id="IPR000529">
    <property type="entry name" value="Ribosomal_bS6"/>
</dbReference>
<dbReference type="InterPro" id="IPR035980">
    <property type="entry name" value="Ribosomal_bS6_sf"/>
</dbReference>
<dbReference type="InterPro" id="IPR020814">
    <property type="entry name" value="Ribosomal_S6_plastid/chlpt"/>
</dbReference>
<dbReference type="InterPro" id="IPR014717">
    <property type="entry name" value="Transl_elong_EF1B/ribsomal_bS6"/>
</dbReference>
<dbReference type="NCBIfam" id="TIGR00166">
    <property type="entry name" value="S6"/>
    <property type="match status" value="1"/>
</dbReference>
<dbReference type="PANTHER" id="PTHR21011">
    <property type="entry name" value="MITOCHONDRIAL 28S RIBOSOMAL PROTEIN S6"/>
    <property type="match status" value="1"/>
</dbReference>
<dbReference type="PANTHER" id="PTHR21011:SF1">
    <property type="entry name" value="SMALL RIBOSOMAL SUBUNIT PROTEIN BS6M"/>
    <property type="match status" value="1"/>
</dbReference>
<dbReference type="Pfam" id="PF01250">
    <property type="entry name" value="Ribosomal_S6"/>
    <property type="match status" value="1"/>
</dbReference>
<dbReference type="SUPFAM" id="SSF54995">
    <property type="entry name" value="Ribosomal protein S6"/>
    <property type="match status" value="1"/>
</dbReference>
<evidence type="ECO:0000255" key="1">
    <source>
        <dbReference type="HAMAP-Rule" id="MF_00360"/>
    </source>
</evidence>
<evidence type="ECO:0000305" key="2"/>
<sequence>MSESKKYEITYIVRPDIDDAAKTALVDRFDKILTDNGAQVIDSKDWSKRRFAYEIGGFNEGTYHIVNLTATDDAALNEFDRLSKINDDILRHMIVKRED</sequence>
<accession>Q890K2</accession>
<accession>F9US39</accession>
<comment type="function">
    <text evidence="1">Binds together with bS18 to 16S ribosomal RNA.</text>
</comment>
<comment type="similarity">
    <text evidence="1">Belongs to the bacterial ribosomal protein bS6 family.</text>
</comment>
<proteinExistence type="inferred from homology"/>
<gene>
    <name evidence="1" type="primary">rpsF</name>
    <name type="ordered locus">lp_0009</name>
</gene>
<name>RS6_LACPL</name>
<protein>
    <recommendedName>
        <fullName evidence="1">Small ribosomal subunit protein bS6</fullName>
    </recommendedName>
    <alternativeName>
        <fullName evidence="2">30S ribosomal protein S6</fullName>
    </alternativeName>
</protein>
<keyword id="KW-1185">Reference proteome</keyword>
<keyword id="KW-0687">Ribonucleoprotein</keyword>
<keyword id="KW-0689">Ribosomal protein</keyword>
<keyword id="KW-0694">RNA-binding</keyword>
<keyword id="KW-0699">rRNA-binding</keyword>